<reference key="1">
    <citation type="journal article" date="2009" name="J. Bacteriol.">
        <title>The genome of Burkholderia cenocepacia J2315, an epidemic pathogen of cystic fibrosis patients.</title>
        <authorList>
            <person name="Holden M.T."/>
            <person name="Seth-Smith H.M."/>
            <person name="Crossman L.C."/>
            <person name="Sebaihia M."/>
            <person name="Bentley S.D."/>
            <person name="Cerdeno-Tarraga A.M."/>
            <person name="Thomson N.R."/>
            <person name="Bason N."/>
            <person name="Quail M.A."/>
            <person name="Sharp S."/>
            <person name="Cherevach I."/>
            <person name="Churcher C."/>
            <person name="Goodhead I."/>
            <person name="Hauser H."/>
            <person name="Holroyd N."/>
            <person name="Mungall K."/>
            <person name="Scott P."/>
            <person name="Walker D."/>
            <person name="White B."/>
            <person name="Rose H."/>
            <person name="Iversen P."/>
            <person name="Mil-Homens D."/>
            <person name="Rocha E.P."/>
            <person name="Fialho A.M."/>
            <person name="Baldwin A."/>
            <person name="Dowson C."/>
            <person name="Barrell B.G."/>
            <person name="Govan J.R."/>
            <person name="Vandamme P."/>
            <person name="Hart C.A."/>
            <person name="Mahenthiralingam E."/>
            <person name="Parkhill J."/>
        </authorList>
    </citation>
    <scope>NUCLEOTIDE SEQUENCE [LARGE SCALE GENOMIC DNA]</scope>
    <source>
        <strain>ATCC BAA-245 / DSM 16553 / LMG 16656 / NCTC 13227 / J2315 / CF5610</strain>
    </source>
</reference>
<proteinExistence type="inferred from homology"/>
<accession>B4EF95</accession>
<name>LIFO_BURCJ</name>
<gene>
    <name evidence="1" type="primary">lifO</name>
    <name type="ordered locus">BceJ2315_44050</name>
    <name type="ORF">BCAM0950</name>
</gene>
<keyword id="KW-0997">Cell inner membrane</keyword>
<keyword id="KW-1003">Cell membrane</keyword>
<keyword id="KW-0143">Chaperone</keyword>
<keyword id="KW-0442">Lipid degradation</keyword>
<keyword id="KW-0443">Lipid metabolism</keyword>
<keyword id="KW-0472">Membrane</keyword>
<keyword id="KW-0812">Transmembrane</keyword>
<keyword id="KW-1133">Transmembrane helix</keyword>
<organism>
    <name type="scientific">Burkholderia cenocepacia (strain ATCC BAA-245 / DSM 16553 / LMG 16656 / NCTC 13227 / J2315 / CF5610)</name>
    <name type="common">Burkholderia cepacia (strain J2315)</name>
    <dbReference type="NCBI Taxonomy" id="216591"/>
    <lineage>
        <taxon>Bacteria</taxon>
        <taxon>Pseudomonadati</taxon>
        <taxon>Pseudomonadota</taxon>
        <taxon>Betaproteobacteria</taxon>
        <taxon>Burkholderiales</taxon>
        <taxon>Burkholderiaceae</taxon>
        <taxon>Burkholderia</taxon>
        <taxon>Burkholderia cepacia complex</taxon>
    </lineage>
</organism>
<comment type="function">
    <text evidence="1">May be involved in the folding of the extracellular lipase during its passage through the periplasm.</text>
</comment>
<comment type="subcellular location">
    <subcellularLocation>
        <location evidence="1">Cell inner membrane</location>
        <topology evidence="1">Single-pass membrane protein</topology>
    </subcellularLocation>
</comment>
<comment type="similarity">
    <text evidence="1">Belongs to the lipase chaperone family.</text>
</comment>
<sequence>MAAREGRAPLVRRAAIYGGVGLAAVAGVAMWSGAGSHRGTGAAGDAPEAAAVGGVAVAASQAAVPASAGVPPSLAGSSAPRLPLDAGGHLAKSRTVRDFFDYCLTARSDLSAAALDAFVVREIAAQLDGTVAQAEALDVWHRYRAYLDALATLRDAGAVDKSDPGALQLALDQRASIAYRTLGDWSQPFFGAEQWRQRYDLARLKITQDRSLTDAQKAERLAALEQQMPADEREAQQRVDRQRAAIDQIAQLRKSGATPDAMRAQLTQTLGPEAAARVAQMQQDDASWQSRYADYAAQRTQIESAGLSPQDRDAQIAALRQRVFTKPGEAVRAASLDRGAGSAH</sequence>
<feature type="chain" id="PRO_1000190851" description="Lipase chaperone">
    <location>
        <begin position="1"/>
        <end position="344"/>
    </location>
</feature>
<feature type="transmembrane region" description="Helical" evidence="1">
    <location>
        <begin position="14"/>
        <end position="34"/>
    </location>
</feature>
<protein>
    <recommendedName>
        <fullName evidence="1">Lipase chaperone</fullName>
    </recommendedName>
    <alternativeName>
        <fullName evidence="1">Lipase activator protein</fullName>
    </alternativeName>
    <alternativeName>
        <fullName evidence="1">Lipase foldase</fullName>
    </alternativeName>
    <alternativeName>
        <fullName evidence="1">Lipase helper protein</fullName>
    </alternativeName>
    <alternativeName>
        <fullName evidence="1">Lipase modulator</fullName>
    </alternativeName>
</protein>
<evidence type="ECO:0000255" key="1">
    <source>
        <dbReference type="HAMAP-Rule" id="MF_00790"/>
    </source>
</evidence>
<dbReference type="EMBL" id="AM747721">
    <property type="protein sequence ID" value="CAR54807.1"/>
    <property type="molecule type" value="Genomic_DNA"/>
</dbReference>
<dbReference type="RefSeq" id="WP_006493459.1">
    <property type="nucleotide sequence ID" value="NC_011001.1"/>
</dbReference>
<dbReference type="SMR" id="B4EF95"/>
<dbReference type="KEGG" id="bcj:BCAM0950"/>
<dbReference type="eggNOG" id="COG5380">
    <property type="taxonomic scope" value="Bacteria"/>
</dbReference>
<dbReference type="HOGENOM" id="CLU_064928_1_0_4"/>
<dbReference type="BioCyc" id="BCEN216591:G1G1V-4939-MONOMER"/>
<dbReference type="Proteomes" id="UP000001035">
    <property type="component" value="Chromosome 2"/>
</dbReference>
<dbReference type="GO" id="GO:0005886">
    <property type="term" value="C:plasma membrane"/>
    <property type="evidence" value="ECO:0007669"/>
    <property type="project" value="UniProtKB-SubCell"/>
</dbReference>
<dbReference type="GO" id="GO:0051082">
    <property type="term" value="F:unfolded protein binding"/>
    <property type="evidence" value="ECO:0007669"/>
    <property type="project" value="UniProtKB-UniRule"/>
</dbReference>
<dbReference type="GO" id="GO:0016042">
    <property type="term" value="P:lipid catabolic process"/>
    <property type="evidence" value="ECO:0007669"/>
    <property type="project" value="UniProtKB-UniRule"/>
</dbReference>
<dbReference type="GO" id="GO:0006457">
    <property type="term" value="P:protein folding"/>
    <property type="evidence" value="ECO:0007669"/>
    <property type="project" value="UniProtKB-UniRule"/>
</dbReference>
<dbReference type="HAMAP" id="MF_00790">
    <property type="entry name" value="Lipase_chap"/>
    <property type="match status" value="1"/>
</dbReference>
<dbReference type="InterPro" id="IPR004961">
    <property type="entry name" value="Lipase_chaperone"/>
</dbReference>
<dbReference type="NCBIfam" id="NF002333">
    <property type="entry name" value="PRK01294.1-1"/>
    <property type="match status" value="1"/>
</dbReference>
<dbReference type="Pfam" id="PF03280">
    <property type="entry name" value="Lipase_chap"/>
    <property type="match status" value="1"/>
</dbReference>
<dbReference type="SUPFAM" id="SSF158855">
    <property type="entry name" value="Lipase chaperone-like"/>
    <property type="match status" value="1"/>
</dbReference>